<organism>
    <name type="scientific">Chromobacterium violaceum (strain ATCC 12472 / DSM 30191 / JCM 1249 / CCUG 213 / NBRC 12614 / NCIMB 9131 / NCTC 9757 / MK)</name>
    <dbReference type="NCBI Taxonomy" id="243365"/>
    <lineage>
        <taxon>Bacteria</taxon>
        <taxon>Pseudomonadati</taxon>
        <taxon>Pseudomonadota</taxon>
        <taxon>Betaproteobacteria</taxon>
        <taxon>Neisseriales</taxon>
        <taxon>Chromobacteriaceae</taxon>
        <taxon>Chromobacterium</taxon>
    </lineage>
</organism>
<gene>
    <name evidence="1" type="primary">argJ</name>
    <name type="ordered locus">CV_0478</name>
</gene>
<keyword id="KW-0012">Acyltransferase</keyword>
<keyword id="KW-0028">Amino-acid biosynthesis</keyword>
<keyword id="KW-0055">Arginine biosynthesis</keyword>
<keyword id="KW-0068">Autocatalytic cleavage</keyword>
<keyword id="KW-0963">Cytoplasm</keyword>
<keyword id="KW-0511">Multifunctional enzyme</keyword>
<keyword id="KW-1185">Reference proteome</keyword>
<keyword id="KW-0808">Transferase</keyword>
<name>ARGJ_CHRVO</name>
<accession>Q7P0T8</accession>
<sequence length="405" mass="42705">MAVNLNPPQAGQLPAVAGVELLVAEAGIKTPGRKDVLVVKLDKGNTVAGVFTRNRFCAAPVQLCQEHLAAGVQIRALVVNTGNANAGTGFDGRARALSVCRAVAERDQLQTEQVLPFSTGVILEPLPADKIVAALPALRQADWAEAAEAIMTTDTLAKAASRRLDIGGKAVTVTGIAKGSGMIHPNMATMLGFVATDAAVTRPMLNQLVREVADQSFNSITVDGDTSTNDSFILISTGQSGAELIDSAEQPAYQQLKQALLEVAIELAQAIVRDGEGATKFITVDVNGGRSVAECKDVAYAIARSPLVKTAFFASDPNLGRLLAAIGYAGVADLDVDRLSLYLDDVLVACEGGRNPAYKEAQGQAVMNQSEITVRVELGRGSASARVWTCDFSYEYVRINADYRS</sequence>
<protein>
    <recommendedName>
        <fullName evidence="1">Arginine biosynthesis bifunctional protein ArgJ</fullName>
    </recommendedName>
    <domain>
        <recommendedName>
            <fullName evidence="1">Glutamate N-acetyltransferase</fullName>
            <ecNumber evidence="1">2.3.1.35</ecNumber>
        </recommendedName>
        <alternativeName>
            <fullName evidence="1">Ornithine acetyltransferase</fullName>
            <shortName evidence="1">OATase</shortName>
        </alternativeName>
        <alternativeName>
            <fullName evidence="1">Ornithine transacetylase</fullName>
        </alternativeName>
    </domain>
    <domain>
        <recommendedName>
            <fullName evidence="1">Amino-acid acetyltransferase</fullName>
            <ecNumber evidence="1">2.3.1.1</ecNumber>
        </recommendedName>
        <alternativeName>
            <fullName evidence="1">N-acetylglutamate synthase</fullName>
            <shortName evidence="1">AGSase</shortName>
        </alternativeName>
    </domain>
    <component>
        <recommendedName>
            <fullName evidence="1">Arginine biosynthesis bifunctional protein ArgJ alpha chain</fullName>
        </recommendedName>
    </component>
    <component>
        <recommendedName>
            <fullName evidence="1">Arginine biosynthesis bifunctional protein ArgJ beta chain</fullName>
        </recommendedName>
    </component>
</protein>
<proteinExistence type="inferred from homology"/>
<comment type="function">
    <text evidence="1">Catalyzes two activities which are involved in the cyclic version of arginine biosynthesis: the synthesis of N-acetylglutamate from glutamate and acetyl-CoA as the acetyl donor, and of ornithine by transacetylation between N(2)-acetylornithine and glutamate.</text>
</comment>
<comment type="catalytic activity">
    <reaction evidence="1">
        <text>N(2)-acetyl-L-ornithine + L-glutamate = N-acetyl-L-glutamate + L-ornithine</text>
        <dbReference type="Rhea" id="RHEA:15349"/>
        <dbReference type="ChEBI" id="CHEBI:29985"/>
        <dbReference type="ChEBI" id="CHEBI:44337"/>
        <dbReference type="ChEBI" id="CHEBI:46911"/>
        <dbReference type="ChEBI" id="CHEBI:57805"/>
        <dbReference type="EC" id="2.3.1.35"/>
    </reaction>
</comment>
<comment type="catalytic activity">
    <reaction evidence="1">
        <text>L-glutamate + acetyl-CoA = N-acetyl-L-glutamate + CoA + H(+)</text>
        <dbReference type="Rhea" id="RHEA:24292"/>
        <dbReference type="ChEBI" id="CHEBI:15378"/>
        <dbReference type="ChEBI" id="CHEBI:29985"/>
        <dbReference type="ChEBI" id="CHEBI:44337"/>
        <dbReference type="ChEBI" id="CHEBI:57287"/>
        <dbReference type="ChEBI" id="CHEBI:57288"/>
        <dbReference type="EC" id="2.3.1.1"/>
    </reaction>
</comment>
<comment type="pathway">
    <text evidence="1">Amino-acid biosynthesis; L-arginine biosynthesis; L-ornithine and N-acetyl-L-glutamate from L-glutamate and N(2)-acetyl-L-ornithine (cyclic): step 1/1.</text>
</comment>
<comment type="pathway">
    <text evidence="1">Amino-acid biosynthesis; L-arginine biosynthesis; N(2)-acetyl-L-ornithine from L-glutamate: step 1/4.</text>
</comment>
<comment type="subunit">
    <text evidence="1">Heterotetramer of two alpha and two beta chains.</text>
</comment>
<comment type="subcellular location">
    <subcellularLocation>
        <location evidence="1">Cytoplasm</location>
    </subcellularLocation>
</comment>
<comment type="similarity">
    <text evidence="1">Belongs to the ArgJ family.</text>
</comment>
<dbReference type="EC" id="2.3.1.35" evidence="1"/>
<dbReference type="EC" id="2.3.1.1" evidence="1"/>
<dbReference type="EMBL" id="AE016825">
    <property type="protein sequence ID" value="AAQ58155.1"/>
    <property type="molecule type" value="Genomic_DNA"/>
</dbReference>
<dbReference type="RefSeq" id="WP_011134033.1">
    <property type="nucleotide sequence ID" value="NC_005085.1"/>
</dbReference>
<dbReference type="SMR" id="Q7P0T8"/>
<dbReference type="STRING" id="243365.CV_0478"/>
<dbReference type="MEROPS" id="T05.001"/>
<dbReference type="KEGG" id="cvi:CV_0478"/>
<dbReference type="eggNOG" id="COG1364">
    <property type="taxonomic scope" value="Bacteria"/>
</dbReference>
<dbReference type="HOGENOM" id="CLU_027172_1_0_4"/>
<dbReference type="OrthoDB" id="9804242at2"/>
<dbReference type="UniPathway" id="UPA00068">
    <property type="reaction ID" value="UER00106"/>
</dbReference>
<dbReference type="UniPathway" id="UPA00068">
    <property type="reaction ID" value="UER00111"/>
</dbReference>
<dbReference type="Proteomes" id="UP000001424">
    <property type="component" value="Chromosome"/>
</dbReference>
<dbReference type="GO" id="GO:0005737">
    <property type="term" value="C:cytoplasm"/>
    <property type="evidence" value="ECO:0007669"/>
    <property type="project" value="UniProtKB-SubCell"/>
</dbReference>
<dbReference type="GO" id="GO:0004358">
    <property type="term" value="F:glutamate N-acetyltransferase activity"/>
    <property type="evidence" value="ECO:0007669"/>
    <property type="project" value="UniProtKB-UniRule"/>
</dbReference>
<dbReference type="GO" id="GO:0004042">
    <property type="term" value="F:L-glutamate N-acetyltransferase activity"/>
    <property type="evidence" value="ECO:0007669"/>
    <property type="project" value="UniProtKB-UniRule"/>
</dbReference>
<dbReference type="GO" id="GO:0006526">
    <property type="term" value="P:L-arginine biosynthetic process"/>
    <property type="evidence" value="ECO:0007669"/>
    <property type="project" value="UniProtKB-UniRule"/>
</dbReference>
<dbReference type="GO" id="GO:0006592">
    <property type="term" value="P:ornithine biosynthetic process"/>
    <property type="evidence" value="ECO:0007669"/>
    <property type="project" value="TreeGrafter"/>
</dbReference>
<dbReference type="CDD" id="cd02152">
    <property type="entry name" value="OAT"/>
    <property type="match status" value="1"/>
</dbReference>
<dbReference type="FunFam" id="3.10.20.340:FF:000001">
    <property type="entry name" value="Arginine biosynthesis bifunctional protein ArgJ, chloroplastic"/>
    <property type="match status" value="1"/>
</dbReference>
<dbReference type="FunFam" id="3.60.70.12:FF:000001">
    <property type="entry name" value="Arginine biosynthesis bifunctional protein ArgJ, chloroplastic"/>
    <property type="match status" value="1"/>
</dbReference>
<dbReference type="Gene3D" id="3.10.20.340">
    <property type="entry name" value="ArgJ beta chain, C-terminal domain"/>
    <property type="match status" value="1"/>
</dbReference>
<dbReference type="Gene3D" id="3.60.70.12">
    <property type="entry name" value="L-amino peptidase D-ALA esterase/amidase"/>
    <property type="match status" value="1"/>
</dbReference>
<dbReference type="HAMAP" id="MF_01106">
    <property type="entry name" value="ArgJ"/>
    <property type="match status" value="1"/>
</dbReference>
<dbReference type="InterPro" id="IPR002813">
    <property type="entry name" value="Arg_biosynth_ArgJ"/>
</dbReference>
<dbReference type="InterPro" id="IPR016117">
    <property type="entry name" value="ArgJ-like_dom_sf"/>
</dbReference>
<dbReference type="InterPro" id="IPR042195">
    <property type="entry name" value="ArgJ_beta_C"/>
</dbReference>
<dbReference type="NCBIfam" id="TIGR00120">
    <property type="entry name" value="ArgJ"/>
    <property type="match status" value="1"/>
</dbReference>
<dbReference type="NCBIfam" id="NF003802">
    <property type="entry name" value="PRK05388.1"/>
    <property type="match status" value="1"/>
</dbReference>
<dbReference type="PANTHER" id="PTHR23100">
    <property type="entry name" value="ARGININE BIOSYNTHESIS BIFUNCTIONAL PROTEIN ARGJ"/>
    <property type="match status" value="1"/>
</dbReference>
<dbReference type="PANTHER" id="PTHR23100:SF0">
    <property type="entry name" value="ARGININE BIOSYNTHESIS BIFUNCTIONAL PROTEIN ARGJ, MITOCHONDRIAL"/>
    <property type="match status" value="1"/>
</dbReference>
<dbReference type="Pfam" id="PF01960">
    <property type="entry name" value="ArgJ"/>
    <property type="match status" value="1"/>
</dbReference>
<dbReference type="SUPFAM" id="SSF56266">
    <property type="entry name" value="DmpA/ArgJ-like"/>
    <property type="match status" value="1"/>
</dbReference>
<reference key="1">
    <citation type="journal article" date="2003" name="Proc. Natl. Acad. Sci. U.S.A.">
        <title>The complete genome sequence of Chromobacterium violaceum reveals remarkable and exploitable bacterial adaptability.</title>
        <authorList>
            <person name="Vasconcelos A.T.R."/>
            <person name="de Almeida D.F."/>
            <person name="Hungria M."/>
            <person name="Guimaraes C.T."/>
            <person name="Antonio R.V."/>
            <person name="Almeida F.C."/>
            <person name="de Almeida L.G.P."/>
            <person name="de Almeida R."/>
            <person name="Alves-Gomes J.A."/>
            <person name="Andrade E.M."/>
            <person name="Araripe J."/>
            <person name="de Araujo M.F.F."/>
            <person name="Astolfi-Filho S."/>
            <person name="Azevedo V."/>
            <person name="Baptista A.J."/>
            <person name="Bataus L.A.M."/>
            <person name="Batista J.S."/>
            <person name="Belo A."/>
            <person name="van den Berg C."/>
            <person name="Bogo M."/>
            <person name="Bonatto S."/>
            <person name="Bordignon J."/>
            <person name="Brigido M.M."/>
            <person name="Brito C.A."/>
            <person name="Brocchi M."/>
            <person name="Burity H.A."/>
            <person name="Camargo A.A."/>
            <person name="Cardoso D.D.P."/>
            <person name="Carneiro N.P."/>
            <person name="Carraro D.M."/>
            <person name="Carvalho C.M.B."/>
            <person name="Cascardo J.C.M."/>
            <person name="Cavada B.S."/>
            <person name="Chueire L.M.O."/>
            <person name="Creczynski-Pasa T.B."/>
            <person name="Cunha-Junior N.C."/>
            <person name="Fagundes N."/>
            <person name="Falcao C.L."/>
            <person name="Fantinatti F."/>
            <person name="Farias I.P."/>
            <person name="Felipe M.S.S."/>
            <person name="Ferrari L.P."/>
            <person name="Ferro J.A."/>
            <person name="Ferro M.I.T."/>
            <person name="Franco G.R."/>
            <person name="Freitas N.S.A."/>
            <person name="Furlan L.R."/>
            <person name="Gazzinelli R.T."/>
            <person name="Gomes E.A."/>
            <person name="Goncalves P.R."/>
            <person name="Grangeiro T.B."/>
            <person name="Grattapaglia D."/>
            <person name="Grisard E.C."/>
            <person name="Hanna E.S."/>
            <person name="Jardim S.N."/>
            <person name="Laurino J."/>
            <person name="Leoi L.C.T."/>
            <person name="Lima L.F.A."/>
            <person name="Loureiro M.F."/>
            <person name="Lyra M.C.C.P."/>
            <person name="Madeira H.M.F."/>
            <person name="Manfio G.P."/>
            <person name="Maranhao A.Q."/>
            <person name="Martins W.S."/>
            <person name="di Mauro S.M.Z."/>
            <person name="de Medeiros S.R.B."/>
            <person name="Meissner R.V."/>
            <person name="Moreira M.A.M."/>
            <person name="Nascimento F.F."/>
            <person name="Nicolas M.F."/>
            <person name="Oliveira J.G."/>
            <person name="Oliveira S.C."/>
            <person name="Paixao R.F.C."/>
            <person name="Parente J.A."/>
            <person name="Pedrosa F.O."/>
            <person name="Pena S.D.J."/>
            <person name="Pereira J.O."/>
            <person name="Pereira M."/>
            <person name="Pinto L.S.R.C."/>
            <person name="Pinto L.S."/>
            <person name="Porto J.I.R."/>
            <person name="Potrich D.P."/>
            <person name="Ramalho-Neto C.E."/>
            <person name="Reis A.M.M."/>
            <person name="Rigo L.U."/>
            <person name="Rondinelli E."/>
            <person name="Santos E.B.P."/>
            <person name="Santos F.R."/>
            <person name="Schneider M.P.C."/>
            <person name="Seuanez H.N."/>
            <person name="Silva A.M.R."/>
            <person name="da Silva A.L.C."/>
            <person name="Silva D.W."/>
            <person name="Silva R."/>
            <person name="Simoes I.C."/>
            <person name="Simon D."/>
            <person name="Soares C.M.A."/>
            <person name="Soares R.B.A."/>
            <person name="Souza E.M."/>
            <person name="Souza K.R.L."/>
            <person name="Souza R.C."/>
            <person name="Steffens M.B.R."/>
            <person name="Steindel M."/>
            <person name="Teixeira S.R."/>
            <person name="Urmenyi T."/>
            <person name="Vettore A."/>
            <person name="Wassem R."/>
            <person name="Zaha A."/>
            <person name="Simpson A.J.G."/>
        </authorList>
    </citation>
    <scope>NUCLEOTIDE SEQUENCE [LARGE SCALE GENOMIC DNA]</scope>
    <source>
        <strain>ATCC 12472 / DSM 30191 / JCM 1249 / CCUG 213 / NBRC 12614 / NCIMB 9131 / NCTC 9757 / MK</strain>
    </source>
</reference>
<feature type="chain" id="PRO_0000002149" description="Arginine biosynthesis bifunctional protein ArgJ alpha chain" evidence="1">
    <location>
        <begin position="1"/>
        <end position="188"/>
    </location>
</feature>
<feature type="chain" id="PRO_0000002150" description="Arginine biosynthesis bifunctional protein ArgJ beta chain" evidence="1">
    <location>
        <begin position="189"/>
        <end position="405"/>
    </location>
</feature>
<feature type="active site" description="Nucleophile" evidence="1">
    <location>
        <position position="189"/>
    </location>
</feature>
<feature type="binding site" evidence="1">
    <location>
        <position position="152"/>
    </location>
    <ligand>
        <name>substrate</name>
    </ligand>
</feature>
<feature type="binding site" evidence="1">
    <location>
        <position position="178"/>
    </location>
    <ligand>
        <name>substrate</name>
    </ligand>
</feature>
<feature type="binding site" evidence="1">
    <location>
        <position position="189"/>
    </location>
    <ligand>
        <name>substrate</name>
    </ligand>
</feature>
<feature type="binding site" evidence="1">
    <location>
        <position position="276"/>
    </location>
    <ligand>
        <name>substrate</name>
    </ligand>
</feature>
<feature type="binding site" evidence="1">
    <location>
        <position position="400"/>
    </location>
    <ligand>
        <name>substrate</name>
    </ligand>
</feature>
<feature type="binding site" evidence="1">
    <location>
        <position position="405"/>
    </location>
    <ligand>
        <name>substrate</name>
    </ligand>
</feature>
<feature type="site" description="Involved in the stabilization of negative charge on the oxyanion by the formation of the oxyanion hole" evidence="1">
    <location>
        <position position="119"/>
    </location>
</feature>
<feature type="site" description="Involved in the stabilization of negative charge on the oxyanion by the formation of the oxyanion hole" evidence="1">
    <location>
        <position position="120"/>
    </location>
</feature>
<feature type="site" description="Cleavage; by autolysis" evidence="1">
    <location>
        <begin position="188"/>
        <end position="189"/>
    </location>
</feature>
<evidence type="ECO:0000255" key="1">
    <source>
        <dbReference type="HAMAP-Rule" id="MF_01106"/>
    </source>
</evidence>